<organism evidence="11">
    <name type="scientific">Vipera ammodytes ammodytes</name>
    <name type="common">Western sand viper</name>
    <dbReference type="NCBI Taxonomy" id="8705"/>
    <lineage>
        <taxon>Eukaryota</taxon>
        <taxon>Metazoa</taxon>
        <taxon>Chordata</taxon>
        <taxon>Craniata</taxon>
        <taxon>Vertebrata</taxon>
        <taxon>Euteleostomi</taxon>
        <taxon>Lepidosauria</taxon>
        <taxon>Squamata</taxon>
        <taxon>Bifurcata</taxon>
        <taxon>Unidentata</taxon>
        <taxon>Episquamata</taxon>
        <taxon>Toxicofera</taxon>
        <taxon>Serpentes</taxon>
        <taxon>Colubroidea</taxon>
        <taxon>Viperidae</taxon>
        <taxon>Viperinae</taxon>
        <taxon>Vipera</taxon>
    </lineage>
</organism>
<keyword id="KW-0106">Calcium</keyword>
<keyword id="KW-1217">Cell adhesion impairing toxin</keyword>
<keyword id="KW-0903">Direct protein sequencing</keyword>
<keyword id="KW-1015">Disulfide bond</keyword>
<keyword id="KW-0325">Glycoprotein</keyword>
<keyword id="KW-1199">Hemostasis impairing toxin</keyword>
<keyword id="KW-0479">Metal-binding</keyword>
<keyword id="KW-1201">Platelet aggregation inhibiting toxin</keyword>
<keyword id="KW-0964">Secreted</keyword>
<keyword id="KW-0732">Signal</keyword>
<keyword id="KW-0800">Toxin</keyword>
<protein>
    <recommendedName>
        <fullName evidence="8">Disintegrin-like/cysteine-rich protein MPIII-3</fullName>
        <shortName evidence="8">D'C protein MPIII-3</shortName>
    </recommendedName>
    <alternativeName>
        <fullName evidence="11">Metalloproteinase-like protein of class P-III MPIII-3</fullName>
    </alternativeName>
    <alternativeName>
        <fullName evidence="7">Snake venom metalloproteinase precursor-derived protein MPIII-3</fullName>
        <shortName evidence="7">SVMP precursor-derived protein MPIII-3</shortName>
    </alternativeName>
    <alternativeName>
        <fullName evidence="8">Snake venom metalloproteinase-like</fullName>
        <shortName evidence="8">SVMP-like</shortName>
    </alternativeName>
    <alternativeName>
        <fullName evidence="7">Vaa-MPIII-3</fullName>
    </alternativeName>
    <alternativeName>
        <fullName evidence="8">VaaMPIII-3</fullName>
    </alternativeName>
</protein>
<sequence>MIQVLLVIICLAVFPYQVSSIILESGNINNYEVVYPQKVTALPKGAIQQLEQKYEDAMQYQFKVKGEPVVLHLEKNKDFFPEDYSETHYSPDDREITTNPPVEDHCYYYGHIQNDADSTASISACNGLKGYFTLRGVTYLIEPLKIPESEAHAIYKYENVEKEDEDPKKCEFRRAGTECRPARSECDVAEYCTGQSAECPTDVFHSNGKPCLNNFGYCYNGNCPIMYHQCYALFGPNATVGQDGCFEWNKKGESYFYCRKENDVPIPCAPEDIKCGRLFCELIKNTCKYDYSEDPDYGMVDHGTKCGDGKVCINRHCVDVTTAY</sequence>
<feature type="signal peptide" evidence="2">
    <location>
        <begin position="1"/>
        <end position="20"/>
    </location>
</feature>
<feature type="propeptide" id="PRO_0000457327" description="Or 174 (in a minor form)" evidence="2 5 6">
    <location>
        <begin position="21"/>
        <end position="173"/>
    </location>
</feature>
<feature type="chain" id="PRO_5025634875" description="Disintegrin-like/cysteine-rich protein MPIII-3" evidence="9 10">
    <location>
        <begin position="174"/>
        <end position="324"/>
    </location>
</feature>
<feature type="domain" description="Disintegrin; truncated" evidence="3 9 10">
    <location>
        <begin position="168"/>
        <end position="207"/>
    </location>
</feature>
<feature type="region of interest" description="Inhibits platelet aggregation" evidence="1">
    <location>
        <begin position="179"/>
        <end position="192"/>
    </location>
</feature>
<feature type="short sequence motif" description="D/ECD-tripeptide" evidence="9 10">
    <location>
        <begin position="185"/>
        <end position="187"/>
    </location>
</feature>
<feature type="binding site" evidence="1">
    <location>
        <position position="187"/>
    </location>
    <ligand>
        <name>Ca(2+)</name>
        <dbReference type="ChEBI" id="CHEBI:29108"/>
    </ligand>
</feature>
<feature type="binding site" evidence="1">
    <location>
        <position position="190"/>
    </location>
    <ligand>
        <name>Ca(2+)</name>
        <dbReference type="ChEBI" id="CHEBI:29108"/>
    </ligand>
</feature>
<feature type="binding site" evidence="1">
    <location>
        <position position="202"/>
    </location>
    <ligand>
        <name>Ca(2+)</name>
        <dbReference type="ChEBI" id="CHEBI:29108"/>
    </ligand>
</feature>
<feature type="binding site" evidence="1">
    <location>
        <position position="203"/>
    </location>
    <ligand>
        <name>Ca(2+)</name>
        <dbReference type="ChEBI" id="CHEBI:29108"/>
    </ligand>
</feature>
<feature type="glycosylation site" description="N-linked (GlcNAc...) asparagine" evidence="4">
    <location>
        <position position="237"/>
    </location>
</feature>
<feature type="disulfide bond" description="Alternate" evidence="3 10">
    <location>
        <begin position="179"/>
        <end position="199"/>
    </location>
</feature>
<feature type="disulfide bond" evidence="3">
    <location>
        <begin position="186"/>
        <end position="218"/>
    </location>
</feature>
<feature type="disulfide bond" description="Alternate" evidence="10">
    <location>
        <begin position="192"/>
        <end position="199"/>
    </location>
</feature>
<feature type="disulfide bond" evidence="3">
    <location>
        <begin position="211"/>
        <end position="223"/>
    </location>
</feature>
<feature type="disulfide bond" evidence="3">
    <location>
        <begin position="230"/>
        <end position="280"/>
    </location>
</feature>
<feature type="disulfide bond" evidence="1">
    <location>
        <begin position="245"/>
        <end position="287"/>
    </location>
</feature>
<feature type="disulfide bond" evidence="3">
    <location>
        <begin position="258"/>
        <end position="268"/>
    </location>
</feature>
<feature type="disulfide bond" evidence="1">
    <location>
        <begin position="275"/>
        <end position="312"/>
    </location>
</feature>
<feature type="disulfide bond" evidence="1">
    <location>
        <begin position="306"/>
        <end position="317"/>
    </location>
</feature>
<accession>A0A6B7FMR5</accession>
<dbReference type="EMBL" id="MG958499">
    <property type="protein sequence ID" value="QBF53416.1"/>
    <property type="molecule type" value="mRNA"/>
</dbReference>
<dbReference type="SMR" id="A0A6B7FMR5"/>
<dbReference type="GO" id="GO:0005576">
    <property type="term" value="C:extracellular region"/>
    <property type="evidence" value="ECO:0007669"/>
    <property type="project" value="UniProtKB-SubCell"/>
</dbReference>
<dbReference type="GO" id="GO:0005886">
    <property type="term" value="C:plasma membrane"/>
    <property type="evidence" value="ECO:0007669"/>
    <property type="project" value="TreeGrafter"/>
</dbReference>
<dbReference type="GO" id="GO:0046872">
    <property type="term" value="F:metal ion binding"/>
    <property type="evidence" value="ECO:0007669"/>
    <property type="project" value="UniProtKB-KW"/>
</dbReference>
<dbReference type="GO" id="GO:0090729">
    <property type="term" value="F:toxin activity"/>
    <property type="evidence" value="ECO:0007669"/>
    <property type="project" value="UniProtKB-KW"/>
</dbReference>
<dbReference type="Gene3D" id="4.10.70.10">
    <property type="entry name" value="Disintegrin domain"/>
    <property type="match status" value="1"/>
</dbReference>
<dbReference type="InterPro" id="IPR006586">
    <property type="entry name" value="ADAM_Cys-rich"/>
</dbReference>
<dbReference type="InterPro" id="IPR001762">
    <property type="entry name" value="Disintegrin_dom"/>
</dbReference>
<dbReference type="InterPro" id="IPR036436">
    <property type="entry name" value="Disintegrin_dom_sf"/>
</dbReference>
<dbReference type="InterPro" id="IPR002870">
    <property type="entry name" value="Peptidase_M12B_N"/>
</dbReference>
<dbReference type="PANTHER" id="PTHR11905">
    <property type="entry name" value="ADAM A DISINTEGRIN AND METALLOPROTEASE DOMAIN"/>
    <property type="match status" value="1"/>
</dbReference>
<dbReference type="PANTHER" id="PTHR11905:SF32">
    <property type="entry name" value="DISINTEGRIN AND METALLOPROTEINASE DOMAIN-CONTAINING PROTEIN 28"/>
    <property type="match status" value="1"/>
</dbReference>
<dbReference type="Pfam" id="PF08516">
    <property type="entry name" value="ADAM_CR"/>
    <property type="match status" value="1"/>
</dbReference>
<dbReference type="Pfam" id="PF00200">
    <property type="entry name" value="Disintegrin"/>
    <property type="match status" value="1"/>
</dbReference>
<dbReference type="Pfam" id="PF01562">
    <property type="entry name" value="Pep_M12B_propep"/>
    <property type="match status" value="1"/>
</dbReference>
<dbReference type="SMART" id="SM00608">
    <property type="entry name" value="ACR"/>
    <property type="match status" value="1"/>
</dbReference>
<dbReference type="SMART" id="SM00050">
    <property type="entry name" value="DISIN"/>
    <property type="match status" value="1"/>
</dbReference>
<dbReference type="SUPFAM" id="SSF57552">
    <property type="entry name" value="Blood coagulation inhibitor (disintegrin)"/>
    <property type="match status" value="1"/>
</dbReference>
<dbReference type="PROSITE" id="PS50214">
    <property type="entry name" value="DISINTEGRIN_2"/>
    <property type="match status" value="1"/>
</dbReference>
<comment type="function">
    <text evidence="6">Abolishes platelet aggregation induced by collagen, ADP (IC(50)=292 nM) and arachidonic-acid. The inhibition of collagen-induced platelet aggregation may be due to its ability to bind collagen and block the binding site on collagen for platelets and/or to its ability to bind to the platelet alpha-2/beta-1 collagen receptor (ITGA2/ITGB1) to block its interaction with collagen and hence prevent platelet stimulation. The inhibition of ADP- or arachidonic-acid-induced platelet aggregation may be due to it acting as an antagonist of the ADP receptors or thromboxane-prostanoid receptors of the platelets, respectively. Does not interact with integrins alpha-IIb (ITGA2B) or beta-3 (ITGB3) nor platelet glycoproteins VI (GP6) or IX (GP9) in vitro, however, the detection is dependent on experimental conditions and may happen in vivo. Able to bind to platelet glycoprotein Ib alpha chain (GP1BA) receptor in vitro, although this interaction may have pathologically only limited effect in vivo as it is not able to abolish the von Willebrand factor (vWF)-dependent platelet agglutination induced by ristocetin. Does not affect blood coagulation.</text>
</comment>
<comment type="activity regulation">
    <text evidence="6">Activity may be regulated by the intramolecular thiol-disulfide exchange or disulfide bond switching.</text>
</comment>
<comment type="biophysicochemical properties">
    <phDependence>
        <text evidence="6">Structurally relatively unstable in pure water, but more stable in various buffers between pH 5-9. Most stable in 20 mM HEPES buffer at pH 7 with the addition of 2 mM Ca(2+).</text>
    </phDependence>
    <temperatureDependence>
        <text evidence="6">Unfolds at 47 degrees Celsius in pure water, but structurally more stable in various buffers up to 60 degrees Celsius.</text>
    </temperatureDependence>
</comment>
<comment type="subunit">
    <text evidence="5 6">Monomer (PubMed:31017792, PubMed:35448841). Is able to form a homodimer (PubMed:35448841).</text>
</comment>
<comment type="subcellular location">
    <subcellularLocation>
        <location evidence="5 6">Secreted</location>
    </subcellularLocation>
</comment>
<comment type="tissue specificity">
    <text evidence="5 6">Expressed by the venom gland (at protein level) (PubMed:31017792, PubMed:35448841). Expressed by the venom gland (PubMed:31017792).</text>
</comment>
<comment type="PTM">
    <text evidence="6">N-glycosylated. Exists in at least six differently N-glycosylated forms. The glycans likely have a stabilizing purpose.</text>
</comment>
<comment type="PTM">
    <text evidence="6">Cys-199 forms a disulfide bond with Cys-192 in 90% and with Cys-179 in 10% of the protein molecules; alternative disulfide bonds may have a major effect on the conformation of the protein.</text>
</comment>
<comment type="biotechnology">
    <text evidence="10">Potentially useful in the development of antithrombotic drugs, particularly due to the possible control of its activity via the redox potential.</text>
</comment>
<comment type="miscellaneous">
    <text evidence="9 10">Arises from a gene lacking the catalytic metalloproteinase (MP) domain and the N-terminal part of the disintegrin-like (D) domain. The latter results in truncated D domain (D').</text>
</comment>
<comment type="similarity">
    <text evidence="7 8">Belongs to the venom metalloproteinase (M12B) family. P-III subfamily. P-IIIe sub-subfamily.</text>
</comment>
<evidence type="ECO:0000250" key="1">
    <source>
        <dbReference type="UniProtKB" id="Q90282"/>
    </source>
</evidence>
<evidence type="ECO:0000255" key="2"/>
<evidence type="ECO:0000255" key="3">
    <source>
        <dbReference type="PROSITE-ProRule" id="PRU00068"/>
    </source>
</evidence>
<evidence type="ECO:0000255" key="4">
    <source>
        <dbReference type="PROSITE-ProRule" id="PRU00498"/>
    </source>
</evidence>
<evidence type="ECO:0000269" key="5">
    <source>
    </source>
</evidence>
<evidence type="ECO:0000269" key="6">
    <source>
    </source>
</evidence>
<evidence type="ECO:0000303" key="7">
    <source>
    </source>
</evidence>
<evidence type="ECO:0000303" key="8">
    <source>
    </source>
</evidence>
<evidence type="ECO:0000305" key="9">
    <source>
    </source>
</evidence>
<evidence type="ECO:0000305" key="10">
    <source>
    </source>
</evidence>
<evidence type="ECO:0000312" key="11">
    <source>
        <dbReference type="EMBL" id="QBF53416.1"/>
    </source>
</evidence>
<name>VMMP3_VIPAA</name>
<reference evidence="11" key="1">
    <citation type="journal article" date="2019" name="J. Proteome Res.">
        <title>Comprehensive Study of the Proteome and Transcriptome of the Venom of the Most Venomous European Viper: Discovery of a New Subclass of Ancestral Snake Venom Metalloproteinase Precursor-Derived Proteins.</title>
        <authorList>
            <person name="Leonardi A."/>
            <person name="Sajevic T."/>
            <person name="Pungercar J."/>
            <person name="Krizaj I."/>
        </authorList>
    </citation>
    <scope>NUCLEOTIDE SEQUENCE [MRNA]</scope>
    <scope>PROTEIN SEQUENCE OF 174-185; 251-259; 252-259; 261-274; 278-284; 285-305; 289-305 AND 316-324</scope>
    <scope>SUBUNIT</scope>
    <scope>SUBCELLULAR LOCATION</scope>
    <scope>TISSUE SPECIFICITY</scope>
    <scope>IDENTIFICATION BY MASS SPECTROMETRY</scope>
    <scope>MOTIF</scope>
    <source>
        <tissue evidence="7">Venom</tissue>
        <tissue evidence="7 11">Venom gland</tissue>
    </source>
</reference>
<reference key="2">
    <citation type="journal article" date="2022" name="Toxins">
        <title>Genomic Confirmation of the P-IIIe Subclass of Snake Venom Metalloproteinases and Characterisation of Its First Member, a Disintegrin-Like/Cysteine-Rich Protein.</title>
        <authorList>
            <person name="Pozek K."/>
            <person name="Leonardi A."/>
            <person name="Pungercar J."/>
            <person name="Rao W."/>
            <person name="Gao Z."/>
            <person name="Liu S."/>
            <person name="Laustsen A.H."/>
            <person name="Trampus Bakija A."/>
            <person name="Rebersek K."/>
            <person name="Podgornik H."/>
            <person name="Krizaj I."/>
        </authorList>
    </citation>
    <scope>PROTEIN SEQUENCE OF 174-192; 175-192; 260-274; 260-277; 261-277; 278-288; 285-305; 289-305 AND 316-324</scope>
    <scope>FUNCTION</scope>
    <scope>ACTIVITY REGULATION</scope>
    <scope>BIOPHYSICOCHEMICAL PROPERTIES</scope>
    <scope>SUBUNIT</scope>
    <scope>SUBCELLULAR LOCATION</scope>
    <scope>TISSUE SPECIFICITY</scope>
    <scope>GLYCOSYLATION</scope>
    <scope>PTM</scope>
    <scope>IDENTIFICATION BY MASS SPECTROMETRY</scope>
    <scope>BIOTECHNOLOGY</scope>
    <scope>MOTIF</scope>
    <scope>ALTERNATE DISULFIDE BONDS</scope>
    <scope>3D-STRUCTURE MODELING</scope>
    <scope>CIRCULAR DICHROISM ANALYSIS</scope>
    <source>
        <tissue evidence="8">Venom</tissue>
    </source>
</reference>
<proteinExistence type="evidence at protein level"/>